<reference key="1">
    <citation type="journal article" date="2002" name="Nucleic Acids Res.">
        <title>Genome sequence of Oceanobacillus iheyensis isolated from the Iheya Ridge and its unexpected adaptive capabilities to extreme environments.</title>
        <authorList>
            <person name="Takami H."/>
            <person name="Takaki Y."/>
            <person name="Uchiyama I."/>
        </authorList>
    </citation>
    <scope>NUCLEOTIDE SEQUENCE [LARGE SCALE GENOMIC DNA]</scope>
    <source>
        <strain>DSM 14371 / CIP 107618 / JCM 11309 / KCTC 3954 / HTE831</strain>
    </source>
</reference>
<organism>
    <name type="scientific">Oceanobacillus iheyensis (strain DSM 14371 / CIP 107618 / JCM 11309 / KCTC 3954 / HTE831)</name>
    <dbReference type="NCBI Taxonomy" id="221109"/>
    <lineage>
        <taxon>Bacteria</taxon>
        <taxon>Bacillati</taxon>
        <taxon>Bacillota</taxon>
        <taxon>Bacilli</taxon>
        <taxon>Bacillales</taxon>
        <taxon>Bacillaceae</taxon>
        <taxon>Oceanobacillus</taxon>
    </lineage>
</organism>
<proteinExistence type="inferred from homology"/>
<keyword id="KW-0320">Glycogen biosynthesis</keyword>
<keyword id="KW-0328">Glycosyltransferase</keyword>
<keyword id="KW-1185">Reference proteome</keyword>
<keyword id="KW-0808">Transferase</keyword>
<comment type="function">
    <text evidence="1">Synthesizes alpha-1,4-glucan chains using ADP-glucose.</text>
</comment>
<comment type="catalytic activity">
    <reaction evidence="1">
        <text>[(1-&gt;4)-alpha-D-glucosyl](n) + ADP-alpha-D-glucose = [(1-&gt;4)-alpha-D-glucosyl](n+1) + ADP + H(+)</text>
        <dbReference type="Rhea" id="RHEA:18189"/>
        <dbReference type="Rhea" id="RHEA-COMP:9584"/>
        <dbReference type="Rhea" id="RHEA-COMP:9587"/>
        <dbReference type="ChEBI" id="CHEBI:15378"/>
        <dbReference type="ChEBI" id="CHEBI:15444"/>
        <dbReference type="ChEBI" id="CHEBI:57498"/>
        <dbReference type="ChEBI" id="CHEBI:456216"/>
        <dbReference type="EC" id="2.4.1.21"/>
    </reaction>
</comment>
<comment type="pathway">
    <text evidence="1">Glycan biosynthesis; glycogen biosynthesis.</text>
</comment>
<comment type="similarity">
    <text evidence="1">Belongs to the glycosyltransferase 1 family. Bacterial/plant glycogen synthase subfamily.</text>
</comment>
<name>GLGA_OCEIH</name>
<dbReference type="EC" id="2.4.1.21" evidence="1"/>
<dbReference type="EMBL" id="BA000028">
    <property type="protein sequence ID" value="BAC12365.1"/>
    <property type="molecule type" value="Genomic_DNA"/>
</dbReference>
<dbReference type="RefSeq" id="WP_011064815.1">
    <property type="nucleotide sequence ID" value="NC_004193.1"/>
</dbReference>
<dbReference type="SMR" id="Q8ET54"/>
<dbReference type="STRING" id="221109.gene:10732612"/>
<dbReference type="CAZy" id="GT5">
    <property type="family name" value="Glycosyltransferase Family 5"/>
</dbReference>
<dbReference type="KEGG" id="oih:OB0409"/>
<dbReference type="eggNOG" id="COG0297">
    <property type="taxonomic scope" value="Bacteria"/>
</dbReference>
<dbReference type="HOGENOM" id="CLU_009583_18_2_9"/>
<dbReference type="OrthoDB" id="9808590at2"/>
<dbReference type="PhylomeDB" id="Q8ET54"/>
<dbReference type="UniPathway" id="UPA00164"/>
<dbReference type="Proteomes" id="UP000000822">
    <property type="component" value="Chromosome"/>
</dbReference>
<dbReference type="GO" id="GO:0009011">
    <property type="term" value="F:alpha-1,4-glucan glucosyltransferase (ADP-glucose donor) activity"/>
    <property type="evidence" value="ECO:0007669"/>
    <property type="project" value="UniProtKB-UniRule"/>
</dbReference>
<dbReference type="GO" id="GO:0004373">
    <property type="term" value="F:alpha-1,4-glucan glucosyltransferase (UDP-glucose donor) activity"/>
    <property type="evidence" value="ECO:0007669"/>
    <property type="project" value="InterPro"/>
</dbReference>
<dbReference type="GO" id="GO:0005978">
    <property type="term" value="P:glycogen biosynthetic process"/>
    <property type="evidence" value="ECO:0007669"/>
    <property type="project" value="UniProtKB-UniRule"/>
</dbReference>
<dbReference type="CDD" id="cd03791">
    <property type="entry name" value="GT5_Glycogen_synthase_DULL1-like"/>
    <property type="match status" value="1"/>
</dbReference>
<dbReference type="Gene3D" id="3.40.50.2000">
    <property type="entry name" value="Glycogen Phosphorylase B"/>
    <property type="match status" value="2"/>
</dbReference>
<dbReference type="HAMAP" id="MF_00484">
    <property type="entry name" value="Glycogen_synth"/>
    <property type="match status" value="1"/>
</dbReference>
<dbReference type="InterPro" id="IPR001296">
    <property type="entry name" value="Glyco_trans_1"/>
</dbReference>
<dbReference type="InterPro" id="IPR011835">
    <property type="entry name" value="GS/SS"/>
</dbReference>
<dbReference type="InterPro" id="IPR013534">
    <property type="entry name" value="Starch_synth_cat_dom"/>
</dbReference>
<dbReference type="NCBIfam" id="TIGR02095">
    <property type="entry name" value="glgA"/>
    <property type="match status" value="1"/>
</dbReference>
<dbReference type="PANTHER" id="PTHR45825:SF11">
    <property type="entry name" value="ALPHA AMYLASE DOMAIN-CONTAINING PROTEIN"/>
    <property type="match status" value="1"/>
</dbReference>
<dbReference type="PANTHER" id="PTHR45825">
    <property type="entry name" value="GRANULE-BOUND STARCH SYNTHASE 1, CHLOROPLASTIC/AMYLOPLASTIC"/>
    <property type="match status" value="1"/>
</dbReference>
<dbReference type="Pfam" id="PF08323">
    <property type="entry name" value="Glyco_transf_5"/>
    <property type="match status" value="1"/>
</dbReference>
<dbReference type="Pfam" id="PF00534">
    <property type="entry name" value="Glycos_transf_1"/>
    <property type="match status" value="1"/>
</dbReference>
<dbReference type="SUPFAM" id="SSF53756">
    <property type="entry name" value="UDP-Glycosyltransferase/glycogen phosphorylase"/>
    <property type="match status" value="1"/>
</dbReference>
<sequence>MKNILFVTSECTPFIKTGGLADVSGSLPQALQEHGGMEVRVMLPLYDEIDRSWKDQFEFVCAFTVSLGWREQTAELYRYRYNDVTYYFIGNDYYFTRKGIYGYYDDGERFVFFSQAIIASLEYIDFIPSVLHAHDWQTGIAVALAKIYQPIEELITVFTIHNIYYQGTMPLTTFDDFFQLGREHLAGMEWNQMINSLKSGIFHADKITTVSPTYAEEILTPYYGAGLEEMLWNRREDLIGVLNGIDLKDYNPAIDKSLPVNYRSARSKKIENRKLLYEEIGLNLKDGVPLYIMVTRLVEQKGIHLVQRILEEFLQEDIQLIVLGNGEQEFEYYFKDIEYRYPDKMITHLHFNESLARRLYASADFLLMPSKFEPCGLSQLIALQYKTVPIVRETGGLKDTIIAFNEITGEGNGFRFANYNAHELLHVLKYSLEIYQQPSLWSVLIKNVNKSKFSWKDSASAYADVYQQLDASSVSYK</sequence>
<protein>
    <recommendedName>
        <fullName evidence="1">Glycogen synthase</fullName>
        <ecNumber evidence="1">2.4.1.21</ecNumber>
    </recommendedName>
    <alternativeName>
        <fullName evidence="1">Starch [bacterial glycogen] synthase</fullName>
    </alternativeName>
</protein>
<feature type="chain" id="PRO_0000188626" description="Glycogen synthase">
    <location>
        <begin position="1"/>
        <end position="477"/>
    </location>
</feature>
<feature type="binding site" evidence="1">
    <location>
        <position position="16"/>
    </location>
    <ligand>
        <name>ADP-alpha-D-glucose</name>
        <dbReference type="ChEBI" id="CHEBI:57498"/>
    </ligand>
</feature>
<evidence type="ECO:0000255" key="1">
    <source>
        <dbReference type="HAMAP-Rule" id="MF_00484"/>
    </source>
</evidence>
<accession>Q8ET54</accession>
<gene>
    <name evidence="1" type="primary">glgA</name>
    <name type="ordered locus">OB0409</name>
</gene>